<sequence>MARIAGVDIPRDKRVVISLTYVFGIGRTTAEKILAEAGISEETRVRDLTEDELGRIRDIIDRIKVEGDLRREVSLNIKRLMEIGSYRGLRHRRGLPVRGQNSKNNARTRKGPRRTVANKKK</sequence>
<comment type="function">
    <text evidence="1">Located at the top of the head of the 30S subunit, it contacts several helices of the 16S rRNA. In the 70S ribosome it contacts the 23S rRNA (bridge B1a) and protein L5 of the 50S subunit (bridge B1b), connecting the 2 subunits; these bridges are implicated in subunit movement. Contacts the tRNAs in the A and P-sites.</text>
</comment>
<comment type="subunit">
    <text evidence="1">Part of the 30S ribosomal subunit. Forms a loose heterodimer with protein S19. Forms two bridges to the 50S subunit in the 70S ribosome.</text>
</comment>
<comment type="similarity">
    <text evidence="1">Belongs to the universal ribosomal protein uS13 family.</text>
</comment>
<organism>
    <name type="scientific">Bacillus cereus (strain AH820)</name>
    <dbReference type="NCBI Taxonomy" id="405535"/>
    <lineage>
        <taxon>Bacteria</taxon>
        <taxon>Bacillati</taxon>
        <taxon>Bacillota</taxon>
        <taxon>Bacilli</taxon>
        <taxon>Bacillales</taxon>
        <taxon>Bacillaceae</taxon>
        <taxon>Bacillus</taxon>
        <taxon>Bacillus cereus group</taxon>
    </lineage>
</organism>
<proteinExistence type="inferred from homology"/>
<dbReference type="EMBL" id="CP001283">
    <property type="protein sequence ID" value="ACK88283.1"/>
    <property type="molecule type" value="Genomic_DNA"/>
</dbReference>
<dbReference type="RefSeq" id="WP_000090788.1">
    <property type="nucleotide sequence ID" value="NC_011773.1"/>
</dbReference>
<dbReference type="SMR" id="B7JKE5"/>
<dbReference type="GeneID" id="93010918"/>
<dbReference type="KEGG" id="bcu:BCAH820_0148"/>
<dbReference type="HOGENOM" id="CLU_103849_1_1_9"/>
<dbReference type="Proteomes" id="UP000001363">
    <property type="component" value="Chromosome"/>
</dbReference>
<dbReference type="GO" id="GO:0005829">
    <property type="term" value="C:cytosol"/>
    <property type="evidence" value="ECO:0007669"/>
    <property type="project" value="TreeGrafter"/>
</dbReference>
<dbReference type="GO" id="GO:0015935">
    <property type="term" value="C:small ribosomal subunit"/>
    <property type="evidence" value="ECO:0007669"/>
    <property type="project" value="TreeGrafter"/>
</dbReference>
<dbReference type="GO" id="GO:0019843">
    <property type="term" value="F:rRNA binding"/>
    <property type="evidence" value="ECO:0007669"/>
    <property type="project" value="UniProtKB-UniRule"/>
</dbReference>
<dbReference type="GO" id="GO:0003735">
    <property type="term" value="F:structural constituent of ribosome"/>
    <property type="evidence" value="ECO:0007669"/>
    <property type="project" value="InterPro"/>
</dbReference>
<dbReference type="GO" id="GO:0000049">
    <property type="term" value="F:tRNA binding"/>
    <property type="evidence" value="ECO:0007669"/>
    <property type="project" value="UniProtKB-UniRule"/>
</dbReference>
<dbReference type="GO" id="GO:0006412">
    <property type="term" value="P:translation"/>
    <property type="evidence" value="ECO:0007669"/>
    <property type="project" value="UniProtKB-UniRule"/>
</dbReference>
<dbReference type="FunFam" id="1.10.8.50:FF:000001">
    <property type="entry name" value="30S ribosomal protein S13"/>
    <property type="match status" value="1"/>
</dbReference>
<dbReference type="FunFam" id="4.10.910.10:FF:000001">
    <property type="entry name" value="30S ribosomal protein S13"/>
    <property type="match status" value="1"/>
</dbReference>
<dbReference type="Gene3D" id="1.10.8.50">
    <property type="match status" value="1"/>
</dbReference>
<dbReference type="Gene3D" id="4.10.910.10">
    <property type="entry name" value="30s ribosomal protein s13, domain 2"/>
    <property type="match status" value="1"/>
</dbReference>
<dbReference type="HAMAP" id="MF_01315">
    <property type="entry name" value="Ribosomal_uS13"/>
    <property type="match status" value="1"/>
</dbReference>
<dbReference type="InterPro" id="IPR027437">
    <property type="entry name" value="Rbsml_uS13_C"/>
</dbReference>
<dbReference type="InterPro" id="IPR001892">
    <property type="entry name" value="Ribosomal_uS13"/>
</dbReference>
<dbReference type="InterPro" id="IPR010979">
    <property type="entry name" value="Ribosomal_uS13-like_H2TH"/>
</dbReference>
<dbReference type="InterPro" id="IPR019980">
    <property type="entry name" value="Ribosomal_uS13_bac-type"/>
</dbReference>
<dbReference type="InterPro" id="IPR018269">
    <property type="entry name" value="Ribosomal_uS13_CS"/>
</dbReference>
<dbReference type="NCBIfam" id="TIGR03631">
    <property type="entry name" value="uS13_bact"/>
    <property type="match status" value="1"/>
</dbReference>
<dbReference type="PANTHER" id="PTHR10871">
    <property type="entry name" value="30S RIBOSOMAL PROTEIN S13/40S RIBOSOMAL PROTEIN S18"/>
    <property type="match status" value="1"/>
</dbReference>
<dbReference type="PANTHER" id="PTHR10871:SF1">
    <property type="entry name" value="SMALL RIBOSOMAL SUBUNIT PROTEIN US13M"/>
    <property type="match status" value="1"/>
</dbReference>
<dbReference type="Pfam" id="PF00416">
    <property type="entry name" value="Ribosomal_S13"/>
    <property type="match status" value="1"/>
</dbReference>
<dbReference type="PIRSF" id="PIRSF002134">
    <property type="entry name" value="Ribosomal_S13"/>
    <property type="match status" value="1"/>
</dbReference>
<dbReference type="SUPFAM" id="SSF46946">
    <property type="entry name" value="S13-like H2TH domain"/>
    <property type="match status" value="1"/>
</dbReference>
<dbReference type="PROSITE" id="PS00646">
    <property type="entry name" value="RIBOSOMAL_S13_1"/>
    <property type="match status" value="1"/>
</dbReference>
<dbReference type="PROSITE" id="PS50159">
    <property type="entry name" value="RIBOSOMAL_S13_2"/>
    <property type="match status" value="1"/>
</dbReference>
<gene>
    <name evidence="1" type="primary">rpsM</name>
    <name type="ordered locus">BCAH820_0148</name>
</gene>
<feature type="chain" id="PRO_1000141216" description="Small ribosomal subunit protein uS13">
    <location>
        <begin position="1"/>
        <end position="121"/>
    </location>
</feature>
<feature type="region of interest" description="Disordered" evidence="2">
    <location>
        <begin position="91"/>
        <end position="121"/>
    </location>
</feature>
<feature type="compositionally biased region" description="Basic residues" evidence="2">
    <location>
        <begin position="106"/>
        <end position="121"/>
    </location>
</feature>
<evidence type="ECO:0000255" key="1">
    <source>
        <dbReference type="HAMAP-Rule" id="MF_01315"/>
    </source>
</evidence>
<evidence type="ECO:0000256" key="2">
    <source>
        <dbReference type="SAM" id="MobiDB-lite"/>
    </source>
</evidence>
<evidence type="ECO:0000305" key="3"/>
<name>RS13_BACC0</name>
<protein>
    <recommendedName>
        <fullName evidence="1">Small ribosomal subunit protein uS13</fullName>
    </recommendedName>
    <alternativeName>
        <fullName evidence="3">30S ribosomal protein S13</fullName>
    </alternativeName>
</protein>
<reference key="1">
    <citation type="submission" date="2008-10" db="EMBL/GenBank/DDBJ databases">
        <title>Genome sequence of Bacillus cereus AH820.</title>
        <authorList>
            <person name="Dodson R.J."/>
            <person name="Durkin A.S."/>
            <person name="Rosovitz M.J."/>
            <person name="Rasko D.A."/>
            <person name="Hoffmaster A."/>
            <person name="Ravel J."/>
            <person name="Sutton G."/>
        </authorList>
    </citation>
    <scope>NUCLEOTIDE SEQUENCE [LARGE SCALE GENOMIC DNA]</scope>
    <source>
        <strain>AH820</strain>
    </source>
</reference>
<keyword id="KW-0687">Ribonucleoprotein</keyword>
<keyword id="KW-0689">Ribosomal protein</keyword>
<keyword id="KW-0694">RNA-binding</keyword>
<keyword id="KW-0699">rRNA-binding</keyword>
<keyword id="KW-0820">tRNA-binding</keyword>
<accession>B7JKE5</accession>